<proteinExistence type="inferred from homology"/>
<evidence type="ECO:0000255" key="1">
    <source>
        <dbReference type="HAMAP-Rule" id="MF_00005"/>
    </source>
</evidence>
<comment type="catalytic activity">
    <reaction evidence="1">
        <text>L-citrulline + L-aspartate + ATP = 2-(N(omega)-L-arginino)succinate + AMP + diphosphate + H(+)</text>
        <dbReference type="Rhea" id="RHEA:10932"/>
        <dbReference type="ChEBI" id="CHEBI:15378"/>
        <dbReference type="ChEBI" id="CHEBI:29991"/>
        <dbReference type="ChEBI" id="CHEBI:30616"/>
        <dbReference type="ChEBI" id="CHEBI:33019"/>
        <dbReference type="ChEBI" id="CHEBI:57472"/>
        <dbReference type="ChEBI" id="CHEBI:57743"/>
        <dbReference type="ChEBI" id="CHEBI:456215"/>
        <dbReference type="EC" id="6.3.4.5"/>
    </reaction>
</comment>
<comment type="pathway">
    <text evidence="1">Amino-acid biosynthesis; L-arginine biosynthesis; L-arginine from L-ornithine and carbamoyl phosphate: step 2/3.</text>
</comment>
<comment type="subunit">
    <text evidence="1">Homotetramer.</text>
</comment>
<comment type="subcellular location">
    <subcellularLocation>
        <location evidence="1">Cytoplasm</location>
    </subcellularLocation>
</comment>
<comment type="similarity">
    <text evidence="1">Belongs to the argininosuccinate synthase family. Type 1 subfamily.</text>
</comment>
<name>ASSY_LISMO</name>
<organism>
    <name type="scientific">Listeria monocytogenes serovar 1/2a (strain ATCC BAA-679 / EGD-e)</name>
    <dbReference type="NCBI Taxonomy" id="169963"/>
    <lineage>
        <taxon>Bacteria</taxon>
        <taxon>Bacillati</taxon>
        <taxon>Bacillota</taxon>
        <taxon>Bacilli</taxon>
        <taxon>Bacillales</taxon>
        <taxon>Listeriaceae</taxon>
        <taxon>Listeria</taxon>
    </lineage>
</organism>
<protein>
    <recommendedName>
        <fullName evidence="1">Argininosuccinate synthase</fullName>
        <ecNumber evidence="1">6.3.4.5</ecNumber>
    </recommendedName>
    <alternativeName>
        <fullName evidence="1">Citrulline--aspartate ligase</fullName>
    </alternativeName>
</protein>
<accession>Q8Y5H2</accession>
<keyword id="KW-0028">Amino-acid biosynthesis</keyword>
<keyword id="KW-0055">Arginine biosynthesis</keyword>
<keyword id="KW-0067">ATP-binding</keyword>
<keyword id="KW-0963">Cytoplasm</keyword>
<keyword id="KW-0436">Ligase</keyword>
<keyword id="KW-0547">Nucleotide-binding</keyword>
<keyword id="KW-1185">Reference proteome</keyword>
<gene>
    <name evidence="1" type="primary">argG</name>
    <name type="ordered locus">lmo2090</name>
</gene>
<dbReference type="EC" id="6.3.4.5" evidence="1"/>
<dbReference type="EMBL" id="AL591982">
    <property type="protein sequence ID" value="CAD00168.1"/>
    <property type="molecule type" value="Genomic_DNA"/>
</dbReference>
<dbReference type="PIR" id="AB1336">
    <property type="entry name" value="AB1336"/>
</dbReference>
<dbReference type="RefSeq" id="NP_465614.1">
    <property type="nucleotide sequence ID" value="NC_003210.1"/>
</dbReference>
<dbReference type="RefSeq" id="WP_003731945.1">
    <property type="nucleotide sequence ID" value="NZ_CP149495.1"/>
</dbReference>
<dbReference type="SMR" id="Q8Y5H2"/>
<dbReference type="STRING" id="169963.gene:17594776"/>
<dbReference type="PaxDb" id="169963-lmo2090"/>
<dbReference type="EnsemblBacteria" id="CAD00168">
    <property type="protein sequence ID" value="CAD00168"/>
    <property type="gene ID" value="CAD00168"/>
</dbReference>
<dbReference type="GeneID" id="984368"/>
<dbReference type="KEGG" id="lmo:lmo2090"/>
<dbReference type="PATRIC" id="fig|169963.11.peg.2140"/>
<dbReference type="eggNOG" id="COG0137">
    <property type="taxonomic scope" value="Bacteria"/>
</dbReference>
<dbReference type="HOGENOM" id="CLU_032784_4_2_9"/>
<dbReference type="OrthoDB" id="9801641at2"/>
<dbReference type="PhylomeDB" id="Q8Y5H2"/>
<dbReference type="BioCyc" id="LMON169963:LMO2090-MONOMER"/>
<dbReference type="UniPathway" id="UPA00068">
    <property type="reaction ID" value="UER00113"/>
</dbReference>
<dbReference type="Proteomes" id="UP000000817">
    <property type="component" value="Chromosome"/>
</dbReference>
<dbReference type="GO" id="GO:0005737">
    <property type="term" value="C:cytoplasm"/>
    <property type="evidence" value="ECO:0000318"/>
    <property type="project" value="GO_Central"/>
</dbReference>
<dbReference type="GO" id="GO:0004055">
    <property type="term" value="F:argininosuccinate synthase activity"/>
    <property type="evidence" value="ECO:0000318"/>
    <property type="project" value="GO_Central"/>
</dbReference>
<dbReference type="GO" id="GO:0005524">
    <property type="term" value="F:ATP binding"/>
    <property type="evidence" value="ECO:0007669"/>
    <property type="project" value="UniProtKB-UniRule"/>
</dbReference>
<dbReference type="GO" id="GO:0000053">
    <property type="term" value="P:argininosuccinate metabolic process"/>
    <property type="evidence" value="ECO:0000318"/>
    <property type="project" value="GO_Central"/>
</dbReference>
<dbReference type="GO" id="GO:0006526">
    <property type="term" value="P:L-arginine biosynthetic process"/>
    <property type="evidence" value="ECO:0000318"/>
    <property type="project" value="GO_Central"/>
</dbReference>
<dbReference type="GO" id="GO:0000050">
    <property type="term" value="P:urea cycle"/>
    <property type="evidence" value="ECO:0000318"/>
    <property type="project" value="GO_Central"/>
</dbReference>
<dbReference type="CDD" id="cd01999">
    <property type="entry name" value="ASS"/>
    <property type="match status" value="1"/>
</dbReference>
<dbReference type="FunFam" id="1.20.5.470:FF:000002">
    <property type="entry name" value="Argininosuccinate synthase"/>
    <property type="match status" value="1"/>
</dbReference>
<dbReference type="FunFam" id="3.40.50.620:FF:000038">
    <property type="entry name" value="Argininosuccinate synthase"/>
    <property type="match status" value="1"/>
</dbReference>
<dbReference type="FunFam" id="3.90.1260.10:FF:000007">
    <property type="entry name" value="Argininosuccinate synthase"/>
    <property type="match status" value="1"/>
</dbReference>
<dbReference type="Gene3D" id="3.90.1260.10">
    <property type="entry name" value="Argininosuccinate synthetase, chain A, domain 2"/>
    <property type="match status" value="1"/>
</dbReference>
<dbReference type="Gene3D" id="3.40.50.620">
    <property type="entry name" value="HUPs"/>
    <property type="match status" value="1"/>
</dbReference>
<dbReference type="Gene3D" id="1.20.5.470">
    <property type="entry name" value="Single helix bin"/>
    <property type="match status" value="1"/>
</dbReference>
<dbReference type="HAMAP" id="MF_00005">
    <property type="entry name" value="Arg_succ_synth_type1"/>
    <property type="match status" value="1"/>
</dbReference>
<dbReference type="InterPro" id="IPR048268">
    <property type="entry name" value="Arginosuc_syn_C"/>
</dbReference>
<dbReference type="InterPro" id="IPR048267">
    <property type="entry name" value="Arginosuc_syn_N"/>
</dbReference>
<dbReference type="InterPro" id="IPR001518">
    <property type="entry name" value="Arginosuc_synth"/>
</dbReference>
<dbReference type="InterPro" id="IPR018223">
    <property type="entry name" value="Arginosuc_synth_CS"/>
</dbReference>
<dbReference type="InterPro" id="IPR023434">
    <property type="entry name" value="Arginosuc_synth_type_1_subfam"/>
</dbReference>
<dbReference type="InterPro" id="IPR024074">
    <property type="entry name" value="AS_cat/multimer_dom_body"/>
</dbReference>
<dbReference type="InterPro" id="IPR014729">
    <property type="entry name" value="Rossmann-like_a/b/a_fold"/>
</dbReference>
<dbReference type="NCBIfam" id="TIGR00032">
    <property type="entry name" value="argG"/>
    <property type="match status" value="1"/>
</dbReference>
<dbReference type="NCBIfam" id="NF001770">
    <property type="entry name" value="PRK00509.1"/>
    <property type="match status" value="1"/>
</dbReference>
<dbReference type="PANTHER" id="PTHR11587">
    <property type="entry name" value="ARGININOSUCCINATE SYNTHASE"/>
    <property type="match status" value="1"/>
</dbReference>
<dbReference type="PANTHER" id="PTHR11587:SF2">
    <property type="entry name" value="ARGININOSUCCINATE SYNTHASE"/>
    <property type="match status" value="1"/>
</dbReference>
<dbReference type="Pfam" id="PF20979">
    <property type="entry name" value="Arginosuc_syn_C"/>
    <property type="match status" value="1"/>
</dbReference>
<dbReference type="Pfam" id="PF00764">
    <property type="entry name" value="Arginosuc_synth"/>
    <property type="match status" value="1"/>
</dbReference>
<dbReference type="SUPFAM" id="SSF52402">
    <property type="entry name" value="Adenine nucleotide alpha hydrolases-like"/>
    <property type="match status" value="1"/>
</dbReference>
<dbReference type="SUPFAM" id="SSF69864">
    <property type="entry name" value="Argininosuccinate synthetase, C-terminal domain"/>
    <property type="match status" value="1"/>
</dbReference>
<dbReference type="PROSITE" id="PS00564">
    <property type="entry name" value="ARGININOSUCCIN_SYN_1"/>
    <property type="match status" value="1"/>
</dbReference>
<dbReference type="PROSITE" id="PS00565">
    <property type="entry name" value="ARGININOSUCCIN_SYN_2"/>
    <property type="match status" value="1"/>
</dbReference>
<sequence length="404" mass="44480">MAKEKIVLAYSGGLDTSVAIQWLVESGYEVIACCLDVGEGKNLDFIKEKAITVGASESYTIDAKEEFAEDFALIALQAHAYYEGKYPLISALSRPLIAKKLVEVARQEGASAIAHGCTGKGNDQVRFEVAIHALAPDLKVVSPVRDWKWSREEEINYAKEHDIPVPIDLDNPFSIDQNLWGRSNECGVLENPWTTPPEAAYDLTVSLEDAPDTADIVEITFDAGIPISLNGENMSLANLILTLNEIAGKHGVGRIDHIENRLVGIKSREVYECPAAVTLITAHKELEDLTFVREVAHFKPIIEQKISETIYNGLWFSPLTEALVAFLKSTQKFVNGTIRVKLFKGHAIVEGRKSPNSLYDENLATYTSSDTFDQDAAVGFIKLWGLPTKVNAEVNSKVTITTEV</sequence>
<feature type="chain" id="PRO_0000148610" description="Argininosuccinate synthase">
    <location>
        <begin position="1"/>
        <end position="404"/>
    </location>
</feature>
<feature type="binding site" evidence="1">
    <location>
        <begin position="9"/>
        <end position="17"/>
    </location>
    <ligand>
        <name>ATP</name>
        <dbReference type="ChEBI" id="CHEBI:30616"/>
    </ligand>
</feature>
<feature type="binding site" evidence="1">
    <location>
        <position position="86"/>
    </location>
    <ligand>
        <name>L-citrulline</name>
        <dbReference type="ChEBI" id="CHEBI:57743"/>
    </ligand>
</feature>
<feature type="binding site" evidence="1">
    <location>
        <position position="116"/>
    </location>
    <ligand>
        <name>ATP</name>
        <dbReference type="ChEBI" id="CHEBI:30616"/>
    </ligand>
</feature>
<feature type="binding site" evidence="1">
    <location>
        <position position="118"/>
    </location>
    <ligand>
        <name>L-aspartate</name>
        <dbReference type="ChEBI" id="CHEBI:29991"/>
    </ligand>
</feature>
<feature type="binding site" evidence="1">
    <location>
        <position position="122"/>
    </location>
    <ligand>
        <name>L-aspartate</name>
        <dbReference type="ChEBI" id="CHEBI:29991"/>
    </ligand>
</feature>
<feature type="binding site" evidence="1">
    <location>
        <position position="122"/>
    </location>
    <ligand>
        <name>L-citrulline</name>
        <dbReference type="ChEBI" id="CHEBI:57743"/>
    </ligand>
</feature>
<feature type="binding site" evidence="1">
    <location>
        <position position="123"/>
    </location>
    <ligand>
        <name>L-aspartate</name>
        <dbReference type="ChEBI" id="CHEBI:29991"/>
    </ligand>
</feature>
<feature type="binding site" evidence="1">
    <location>
        <position position="126"/>
    </location>
    <ligand>
        <name>L-citrulline</name>
        <dbReference type="ChEBI" id="CHEBI:57743"/>
    </ligand>
</feature>
<feature type="binding site" evidence="1">
    <location>
        <position position="174"/>
    </location>
    <ligand>
        <name>L-citrulline</name>
        <dbReference type="ChEBI" id="CHEBI:57743"/>
    </ligand>
</feature>
<feature type="binding site" evidence="1">
    <location>
        <position position="183"/>
    </location>
    <ligand>
        <name>L-citrulline</name>
        <dbReference type="ChEBI" id="CHEBI:57743"/>
    </ligand>
</feature>
<feature type="binding site" evidence="1">
    <location>
        <position position="259"/>
    </location>
    <ligand>
        <name>L-citrulline</name>
        <dbReference type="ChEBI" id="CHEBI:57743"/>
    </ligand>
</feature>
<feature type="binding site" evidence="1">
    <location>
        <position position="271"/>
    </location>
    <ligand>
        <name>L-citrulline</name>
        <dbReference type="ChEBI" id="CHEBI:57743"/>
    </ligand>
</feature>
<reference key="1">
    <citation type="journal article" date="2001" name="Science">
        <title>Comparative genomics of Listeria species.</title>
        <authorList>
            <person name="Glaser P."/>
            <person name="Frangeul L."/>
            <person name="Buchrieser C."/>
            <person name="Rusniok C."/>
            <person name="Amend A."/>
            <person name="Baquero F."/>
            <person name="Berche P."/>
            <person name="Bloecker H."/>
            <person name="Brandt P."/>
            <person name="Chakraborty T."/>
            <person name="Charbit A."/>
            <person name="Chetouani F."/>
            <person name="Couve E."/>
            <person name="de Daruvar A."/>
            <person name="Dehoux P."/>
            <person name="Domann E."/>
            <person name="Dominguez-Bernal G."/>
            <person name="Duchaud E."/>
            <person name="Durant L."/>
            <person name="Dussurget O."/>
            <person name="Entian K.-D."/>
            <person name="Fsihi H."/>
            <person name="Garcia-del Portillo F."/>
            <person name="Garrido P."/>
            <person name="Gautier L."/>
            <person name="Goebel W."/>
            <person name="Gomez-Lopez N."/>
            <person name="Hain T."/>
            <person name="Hauf J."/>
            <person name="Jackson D."/>
            <person name="Jones L.-M."/>
            <person name="Kaerst U."/>
            <person name="Kreft J."/>
            <person name="Kuhn M."/>
            <person name="Kunst F."/>
            <person name="Kurapkat G."/>
            <person name="Madueno E."/>
            <person name="Maitournam A."/>
            <person name="Mata Vicente J."/>
            <person name="Ng E."/>
            <person name="Nedjari H."/>
            <person name="Nordsiek G."/>
            <person name="Novella S."/>
            <person name="de Pablos B."/>
            <person name="Perez-Diaz J.-C."/>
            <person name="Purcell R."/>
            <person name="Remmel B."/>
            <person name="Rose M."/>
            <person name="Schlueter T."/>
            <person name="Simoes N."/>
            <person name="Tierrez A."/>
            <person name="Vazquez-Boland J.-A."/>
            <person name="Voss H."/>
            <person name="Wehland J."/>
            <person name="Cossart P."/>
        </authorList>
    </citation>
    <scope>NUCLEOTIDE SEQUENCE [LARGE SCALE GENOMIC DNA]</scope>
    <source>
        <strain>ATCC BAA-679 / EGD-e</strain>
    </source>
</reference>